<reference key="1">
    <citation type="journal article" date="2001" name="Science">
        <title>The genome of the natural genetic engineer Agrobacterium tumefaciens C58.</title>
        <authorList>
            <person name="Wood D.W."/>
            <person name="Setubal J.C."/>
            <person name="Kaul R."/>
            <person name="Monks D.E."/>
            <person name="Kitajima J.P."/>
            <person name="Okura V.K."/>
            <person name="Zhou Y."/>
            <person name="Chen L."/>
            <person name="Wood G.E."/>
            <person name="Almeida N.F. Jr."/>
            <person name="Woo L."/>
            <person name="Chen Y."/>
            <person name="Paulsen I.T."/>
            <person name="Eisen J.A."/>
            <person name="Karp P.D."/>
            <person name="Bovee D. Sr."/>
            <person name="Chapman P."/>
            <person name="Clendenning J."/>
            <person name="Deatherage G."/>
            <person name="Gillet W."/>
            <person name="Grant C."/>
            <person name="Kutyavin T."/>
            <person name="Levy R."/>
            <person name="Li M.-J."/>
            <person name="McClelland E."/>
            <person name="Palmieri A."/>
            <person name="Raymond C."/>
            <person name="Rouse G."/>
            <person name="Saenphimmachak C."/>
            <person name="Wu Z."/>
            <person name="Romero P."/>
            <person name="Gordon D."/>
            <person name="Zhang S."/>
            <person name="Yoo H."/>
            <person name="Tao Y."/>
            <person name="Biddle P."/>
            <person name="Jung M."/>
            <person name="Krespan W."/>
            <person name="Perry M."/>
            <person name="Gordon-Kamm B."/>
            <person name="Liao L."/>
            <person name="Kim S."/>
            <person name="Hendrick C."/>
            <person name="Zhao Z.-Y."/>
            <person name="Dolan M."/>
            <person name="Chumley F."/>
            <person name="Tingey S.V."/>
            <person name="Tomb J.-F."/>
            <person name="Gordon M.P."/>
            <person name="Olson M.V."/>
            <person name="Nester E.W."/>
        </authorList>
    </citation>
    <scope>NUCLEOTIDE SEQUENCE [LARGE SCALE GENOMIC DNA]</scope>
    <source>
        <strain>C58 / ATCC 33970</strain>
    </source>
</reference>
<reference key="2">
    <citation type="journal article" date="2001" name="Science">
        <title>Genome sequence of the plant pathogen and biotechnology agent Agrobacterium tumefaciens C58.</title>
        <authorList>
            <person name="Goodner B."/>
            <person name="Hinkle G."/>
            <person name="Gattung S."/>
            <person name="Miller N."/>
            <person name="Blanchard M."/>
            <person name="Qurollo B."/>
            <person name="Goldman B.S."/>
            <person name="Cao Y."/>
            <person name="Askenazi M."/>
            <person name="Halling C."/>
            <person name="Mullin L."/>
            <person name="Houmiel K."/>
            <person name="Gordon J."/>
            <person name="Vaudin M."/>
            <person name="Iartchouk O."/>
            <person name="Epp A."/>
            <person name="Liu F."/>
            <person name="Wollam C."/>
            <person name="Allinger M."/>
            <person name="Doughty D."/>
            <person name="Scott C."/>
            <person name="Lappas C."/>
            <person name="Markelz B."/>
            <person name="Flanagan C."/>
            <person name="Crowell C."/>
            <person name="Gurson J."/>
            <person name="Lomo C."/>
            <person name="Sear C."/>
            <person name="Strub G."/>
            <person name="Cielo C."/>
            <person name="Slater S."/>
        </authorList>
    </citation>
    <scope>NUCLEOTIDE SEQUENCE [LARGE SCALE GENOMIC DNA]</scope>
    <source>
        <strain>C58 / ATCC 33970</strain>
    </source>
</reference>
<dbReference type="EC" id="2.7.7.7"/>
<dbReference type="EMBL" id="AE007869">
    <property type="protein sequence ID" value="AAK87087.2"/>
    <property type="molecule type" value="Genomic_DNA"/>
</dbReference>
<dbReference type="PIR" id="AF2735">
    <property type="entry name" value="AF2735"/>
</dbReference>
<dbReference type="PIR" id="F97516">
    <property type="entry name" value="F97516"/>
</dbReference>
<dbReference type="RefSeq" id="NP_354302.2">
    <property type="nucleotide sequence ID" value="NC_003062.2"/>
</dbReference>
<dbReference type="SMR" id="Q8UFV3"/>
<dbReference type="STRING" id="176299.Atu1294"/>
<dbReference type="EnsemblBacteria" id="AAK87087">
    <property type="protein sequence ID" value="AAK87087"/>
    <property type="gene ID" value="Atu1294"/>
</dbReference>
<dbReference type="KEGG" id="atu:Atu1294"/>
<dbReference type="PATRIC" id="fig|176299.10.peg.1309"/>
<dbReference type="eggNOG" id="COG0389">
    <property type="taxonomic scope" value="Bacteria"/>
</dbReference>
<dbReference type="HOGENOM" id="CLU_012348_1_0_5"/>
<dbReference type="OrthoDB" id="9808813at2"/>
<dbReference type="PhylomeDB" id="Q8UFV3"/>
<dbReference type="BioCyc" id="AGRO:ATU1294-MONOMER"/>
<dbReference type="Proteomes" id="UP000000813">
    <property type="component" value="Chromosome circular"/>
</dbReference>
<dbReference type="GO" id="GO:0005829">
    <property type="term" value="C:cytosol"/>
    <property type="evidence" value="ECO:0007669"/>
    <property type="project" value="TreeGrafter"/>
</dbReference>
<dbReference type="GO" id="GO:0003684">
    <property type="term" value="F:damaged DNA binding"/>
    <property type="evidence" value="ECO:0007669"/>
    <property type="project" value="InterPro"/>
</dbReference>
<dbReference type="GO" id="GO:0003887">
    <property type="term" value="F:DNA-directed DNA polymerase activity"/>
    <property type="evidence" value="ECO:0007669"/>
    <property type="project" value="UniProtKB-UniRule"/>
</dbReference>
<dbReference type="GO" id="GO:0000287">
    <property type="term" value="F:magnesium ion binding"/>
    <property type="evidence" value="ECO:0007669"/>
    <property type="project" value="UniProtKB-UniRule"/>
</dbReference>
<dbReference type="GO" id="GO:0006261">
    <property type="term" value="P:DNA-templated DNA replication"/>
    <property type="evidence" value="ECO:0007669"/>
    <property type="project" value="UniProtKB-UniRule"/>
</dbReference>
<dbReference type="GO" id="GO:0042276">
    <property type="term" value="P:error-prone translesion synthesis"/>
    <property type="evidence" value="ECO:0007669"/>
    <property type="project" value="TreeGrafter"/>
</dbReference>
<dbReference type="GO" id="GO:0009432">
    <property type="term" value="P:SOS response"/>
    <property type="evidence" value="ECO:0007669"/>
    <property type="project" value="TreeGrafter"/>
</dbReference>
<dbReference type="CDD" id="cd03586">
    <property type="entry name" value="PolY_Pol_IV_kappa"/>
    <property type="match status" value="1"/>
</dbReference>
<dbReference type="FunFam" id="3.30.1490.100:FF:000004">
    <property type="entry name" value="DNA polymerase IV"/>
    <property type="match status" value="1"/>
</dbReference>
<dbReference type="FunFam" id="3.40.1170.60:FF:000001">
    <property type="entry name" value="DNA polymerase IV"/>
    <property type="match status" value="1"/>
</dbReference>
<dbReference type="Gene3D" id="3.30.70.270">
    <property type="match status" value="1"/>
</dbReference>
<dbReference type="Gene3D" id="3.40.1170.60">
    <property type="match status" value="1"/>
</dbReference>
<dbReference type="Gene3D" id="1.10.150.20">
    <property type="entry name" value="5' to 3' exonuclease, C-terminal subdomain"/>
    <property type="match status" value="1"/>
</dbReference>
<dbReference type="Gene3D" id="3.30.1490.100">
    <property type="entry name" value="DNA polymerase, Y-family, little finger domain"/>
    <property type="match status" value="1"/>
</dbReference>
<dbReference type="HAMAP" id="MF_01113">
    <property type="entry name" value="DNApol_IV"/>
    <property type="match status" value="1"/>
</dbReference>
<dbReference type="InterPro" id="IPR043502">
    <property type="entry name" value="DNA/RNA_pol_sf"/>
</dbReference>
<dbReference type="InterPro" id="IPR036775">
    <property type="entry name" value="DNA_pol_Y-fam_lit_finger_sf"/>
</dbReference>
<dbReference type="InterPro" id="IPR017961">
    <property type="entry name" value="DNA_pol_Y-fam_little_finger"/>
</dbReference>
<dbReference type="InterPro" id="IPR050116">
    <property type="entry name" value="DNA_polymerase-Y"/>
</dbReference>
<dbReference type="InterPro" id="IPR022880">
    <property type="entry name" value="DNApol_IV"/>
</dbReference>
<dbReference type="InterPro" id="IPR053848">
    <property type="entry name" value="IMS_HHH_1"/>
</dbReference>
<dbReference type="InterPro" id="IPR043128">
    <property type="entry name" value="Rev_trsase/Diguanyl_cyclase"/>
</dbReference>
<dbReference type="InterPro" id="IPR001126">
    <property type="entry name" value="UmuC"/>
</dbReference>
<dbReference type="NCBIfam" id="NF002677">
    <property type="entry name" value="PRK02406.1"/>
    <property type="match status" value="1"/>
</dbReference>
<dbReference type="NCBIfam" id="NF002751">
    <property type="entry name" value="PRK02794.1"/>
    <property type="match status" value="1"/>
</dbReference>
<dbReference type="PANTHER" id="PTHR11076:SF33">
    <property type="entry name" value="DNA POLYMERASE KAPPA"/>
    <property type="match status" value="1"/>
</dbReference>
<dbReference type="PANTHER" id="PTHR11076">
    <property type="entry name" value="DNA REPAIR POLYMERASE UMUC / TRANSFERASE FAMILY MEMBER"/>
    <property type="match status" value="1"/>
</dbReference>
<dbReference type="Pfam" id="PF00817">
    <property type="entry name" value="IMS"/>
    <property type="match status" value="1"/>
</dbReference>
<dbReference type="Pfam" id="PF11799">
    <property type="entry name" value="IMS_C"/>
    <property type="match status" value="1"/>
</dbReference>
<dbReference type="Pfam" id="PF21999">
    <property type="entry name" value="IMS_HHH_1"/>
    <property type="match status" value="1"/>
</dbReference>
<dbReference type="SUPFAM" id="SSF56672">
    <property type="entry name" value="DNA/RNA polymerases"/>
    <property type="match status" value="1"/>
</dbReference>
<dbReference type="SUPFAM" id="SSF100879">
    <property type="entry name" value="Lesion bypass DNA polymerase (Y-family), little finger domain"/>
    <property type="match status" value="1"/>
</dbReference>
<dbReference type="PROSITE" id="PS50173">
    <property type="entry name" value="UMUC"/>
    <property type="match status" value="1"/>
</dbReference>
<protein>
    <recommendedName>
        <fullName>DNA polymerase IV 1</fullName>
        <shortName>Pol IV 1</shortName>
        <ecNumber>2.7.7.7</ecNumber>
    </recommendedName>
</protein>
<organism>
    <name type="scientific">Agrobacterium fabrum (strain C58 / ATCC 33970)</name>
    <name type="common">Agrobacterium tumefaciens (strain C58)</name>
    <dbReference type="NCBI Taxonomy" id="176299"/>
    <lineage>
        <taxon>Bacteria</taxon>
        <taxon>Pseudomonadati</taxon>
        <taxon>Pseudomonadota</taxon>
        <taxon>Alphaproteobacteria</taxon>
        <taxon>Hyphomicrobiales</taxon>
        <taxon>Rhizobiaceae</taxon>
        <taxon>Rhizobium/Agrobacterium group</taxon>
        <taxon>Agrobacterium</taxon>
        <taxon>Agrobacterium tumefaciens complex</taxon>
    </lineage>
</organism>
<sequence>MRRCRACGSPRLLYHSELYDLSIAHIDCDAFYASVEKRDNPELADKPVIVGGGKRGVVSTACYIARIHGVRSAMPMFKALEACPDAVVIKPDMEKYSRVGREIRTMMQELTPLVQPLSIDEAFLDLSGTEKLHHDPPARVLAKFTGRVEKEVGVSVSAGLSYCKFLAKVASDLQKPRGFSVVGEAEALSFLAARPVTTIWGVGKAFAATLEADGIRMIAQLQEMEESELMRRYGVMGQRLFRLARGIDERHVHNNDPVKSVSSETTFFHDISRHEDLVPILRSLSEKVAWRLKKSGIAGQTVVLKMKTADFKSRTRNRRLDDPTQLADRIFRTGLALLEKETDGTKFRLIGIGVSDLRDAGLADPPDLVDRQATRRAAAEAAMDKLRDKFGKGSVETGYTFRTRK</sequence>
<comment type="function">
    <text evidence="1">Poorly processive, error-prone DNA polymerase involved in untargeted mutagenesis. Copies undamaged DNA at stalled replication forks, which arise in vivo from mismatched or misaligned primer ends. These misaligned primers can be extended by PolIV. Exhibits no 3'-5' exonuclease (proofreading) activity. May be involved in translesional synthesis, in conjunction with the beta clamp from PolIII (By similarity).</text>
</comment>
<comment type="catalytic activity">
    <reaction>
        <text>DNA(n) + a 2'-deoxyribonucleoside 5'-triphosphate = DNA(n+1) + diphosphate</text>
        <dbReference type="Rhea" id="RHEA:22508"/>
        <dbReference type="Rhea" id="RHEA-COMP:17339"/>
        <dbReference type="Rhea" id="RHEA-COMP:17340"/>
        <dbReference type="ChEBI" id="CHEBI:33019"/>
        <dbReference type="ChEBI" id="CHEBI:61560"/>
        <dbReference type="ChEBI" id="CHEBI:173112"/>
        <dbReference type="EC" id="2.7.7.7"/>
    </reaction>
</comment>
<comment type="cofactor">
    <cofactor evidence="1">
        <name>Mg(2+)</name>
        <dbReference type="ChEBI" id="CHEBI:18420"/>
    </cofactor>
    <text evidence="1">Binds 2 magnesium ions per subunit.</text>
</comment>
<comment type="subunit">
    <text evidence="1">Monomer.</text>
</comment>
<comment type="subcellular location">
    <subcellularLocation>
        <location evidence="1">Cytoplasm</location>
    </subcellularLocation>
</comment>
<comment type="similarity">
    <text evidence="2">Belongs to the DNA polymerase type-Y family.</text>
</comment>
<accession>Q8UFV3</accession>
<feature type="chain" id="PRO_0000173898" description="DNA polymerase IV 1">
    <location>
        <begin position="1"/>
        <end position="405"/>
    </location>
</feature>
<feature type="domain" description="UmuC">
    <location>
        <begin position="23"/>
        <end position="203"/>
    </location>
</feature>
<feature type="active site" evidence="1">
    <location>
        <position position="121"/>
    </location>
</feature>
<feature type="binding site" evidence="1">
    <location>
        <position position="27"/>
    </location>
    <ligand>
        <name>Mg(2+)</name>
        <dbReference type="ChEBI" id="CHEBI:18420"/>
    </ligand>
</feature>
<feature type="binding site" evidence="1">
    <location>
        <position position="120"/>
    </location>
    <ligand>
        <name>Mg(2+)</name>
        <dbReference type="ChEBI" id="CHEBI:18420"/>
    </ligand>
</feature>
<feature type="site" description="Substrate discrimination" evidence="1">
    <location>
        <position position="32"/>
    </location>
</feature>
<keyword id="KW-0963">Cytoplasm</keyword>
<keyword id="KW-0227">DNA damage</keyword>
<keyword id="KW-0234">DNA repair</keyword>
<keyword id="KW-0235">DNA replication</keyword>
<keyword id="KW-0238">DNA-binding</keyword>
<keyword id="KW-0239">DNA-directed DNA polymerase</keyword>
<keyword id="KW-0460">Magnesium</keyword>
<keyword id="KW-0479">Metal-binding</keyword>
<keyword id="KW-0515">Mutator protein</keyword>
<keyword id="KW-0548">Nucleotidyltransferase</keyword>
<keyword id="KW-1185">Reference proteome</keyword>
<keyword id="KW-0808">Transferase</keyword>
<gene>
    <name type="primary">dinB1</name>
    <name type="ordered locus">Atu1294</name>
    <name type="ORF">AGR_C_2382</name>
</gene>
<proteinExistence type="inferred from homology"/>
<evidence type="ECO:0000250" key="1"/>
<evidence type="ECO:0000305" key="2"/>
<name>DPO41_AGRFC</name>